<sequence length="210" mass="23415">MSTVEAAKPKTEVSPLLKLVLELGPLMVFFFANSRGEWLASRFPVLADLGGPIFIATGLFMAATAAALAVSWMMTRTLPMMPLISGIVVFVFGALTLWLQNDTFIKMKPTIVNTLFGAILLGGLLFGKSLLGYVFHAAFKLDEEGWRKLTVRWGVFFLFLAVLNEVIWRSFSTDFWVAFKVWGTMPITILFTLAQMPLIMKHSVDQENAK</sequence>
<gene>
    <name evidence="1" type="primary">yciB</name>
    <name type="ordered locus">Smed_3090</name>
</gene>
<name>YCIB_SINMW</name>
<feature type="chain" id="PRO_1000021068" description="Inner membrane-spanning protein YciB">
    <location>
        <begin position="1"/>
        <end position="210"/>
    </location>
</feature>
<feature type="transmembrane region" description="Helical" evidence="1">
    <location>
        <begin position="12"/>
        <end position="32"/>
    </location>
</feature>
<feature type="transmembrane region" description="Helical" evidence="1">
    <location>
        <begin position="53"/>
        <end position="73"/>
    </location>
</feature>
<feature type="transmembrane region" description="Helical" evidence="1">
    <location>
        <begin position="78"/>
        <end position="98"/>
    </location>
</feature>
<feature type="transmembrane region" description="Helical" evidence="1">
    <location>
        <begin position="115"/>
        <end position="135"/>
    </location>
</feature>
<feature type="transmembrane region" description="Helical" evidence="1">
    <location>
        <begin position="153"/>
        <end position="173"/>
    </location>
</feature>
<feature type="transmembrane region" description="Helical" evidence="1">
    <location>
        <begin position="175"/>
        <end position="195"/>
    </location>
</feature>
<dbReference type="EMBL" id="CP000738">
    <property type="protein sequence ID" value="ABR61916.1"/>
    <property type="molecule type" value="Genomic_DNA"/>
</dbReference>
<dbReference type="RefSeq" id="WP_012067297.1">
    <property type="nucleotide sequence ID" value="NC_009636.1"/>
</dbReference>
<dbReference type="RefSeq" id="YP_001328751.1">
    <property type="nucleotide sequence ID" value="NC_009636.1"/>
</dbReference>
<dbReference type="STRING" id="366394.Smed_3090"/>
<dbReference type="KEGG" id="smd:Smed_3090"/>
<dbReference type="PATRIC" id="fig|366394.8.peg.6321"/>
<dbReference type="eggNOG" id="COG2917">
    <property type="taxonomic scope" value="Bacteria"/>
</dbReference>
<dbReference type="HOGENOM" id="CLU_089554_1_1_5"/>
<dbReference type="OrthoDB" id="9788219at2"/>
<dbReference type="Proteomes" id="UP000001108">
    <property type="component" value="Chromosome"/>
</dbReference>
<dbReference type="GO" id="GO:0005886">
    <property type="term" value="C:plasma membrane"/>
    <property type="evidence" value="ECO:0007669"/>
    <property type="project" value="UniProtKB-SubCell"/>
</dbReference>
<dbReference type="HAMAP" id="MF_00189">
    <property type="entry name" value="YciB"/>
    <property type="match status" value="1"/>
</dbReference>
<dbReference type="InterPro" id="IPR006008">
    <property type="entry name" value="YciB"/>
</dbReference>
<dbReference type="NCBIfam" id="TIGR00997">
    <property type="entry name" value="ispZ"/>
    <property type="match status" value="1"/>
</dbReference>
<dbReference type="NCBIfam" id="NF001323">
    <property type="entry name" value="PRK00259.1-1"/>
    <property type="match status" value="1"/>
</dbReference>
<dbReference type="PANTHER" id="PTHR36917:SF1">
    <property type="entry name" value="INNER MEMBRANE-SPANNING PROTEIN YCIB"/>
    <property type="match status" value="1"/>
</dbReference>
<dbReference type="PANTHER" id="PTHR36917">
    <property type="entry name" value="INTRACELLULAR SEPTATION PROTEIN A-RELATED"/>
    <property type="match status" value="1"/>
</dbReference>
<dbReference type="Pfam" id="PF04279">
    <property type="entry name" value="IspA"/>
    <property type="match status" value="1"/>
</dbReference>
<reference key="1">
    <citation type="submission" date="2007-06" db="EMBL/GenBank/DDBJ databases">
        <title>Complete sequence of Sinorhizobium medicae WSM419 chromosome.</title>
        <authorList>
            <consortium name="US DOE Joint Genome Institute"/>
            <person name="Copeland A."/>
            <person name="Lucas S."/>
            <person name="Lapidus A."/>
            <person name="Barry K."/>
            <person name="Glavina del Rio T."/>
            <person name="Dalin E."/>
            <person name="Tice H."/>
            <person name="Pitluck S."/>
            <person name="Chain P."/>
            <person name="Malfatti S."/>
            <person name="Shin M."/>
            <person name="Vergez L."/>
            <person name="Schmutz J."/>
            <person name="Larimer F."/>
            <person name="Land M."/>
            <person name="Hauser L."/>
            <person name="Kyrpides N."/>
            <person name="Mikhailova N."/>
            <person name="Reeve W.G."/>
            <person name="Richardson P."/>
        </authorList>
    </citation>
    <scope>NUCLEOTIDE SEQUENCE [LARGE SCALE GENOMIC DNA]</scope>
    <source>
        <strain>WSM419</strain>
    </source>
</reference>
<organism>
    <name type="scientific">Sinorhizobium medicae (strain WSM419)</name>
    <name type="common">Ensifer medicae</name>
    <dbReference type="NCBI Taxonomy" id="366394"/>
    <lineage>
        <taxon>Bacteria</taxon>
        <taxon>Pseudomonadati</taxon>
        <taxon>Pseudomonadota</taxon>
        <taxon>Alphaproteobacteria</taxon>
        <taxon>Hyphomicrobiales</taxon>
        <taxon>Rhizobiaceae</taxon>
        <taxon>Sinorhizobium/Ensifer group</taxon>
        <taxon>Sinorhizobium</taxon>
    </lineage>
</organism>
<proteinExistence type="inferred from homology"/>
<keyword id="KW-0997">Cell inner membrane</keyword>
<keyword id="KW-1003">Cell membrane</keyword>
<keyword id="KW-0472">Membrane</keyword>
<keyword id="KW-0812">Transmembrane</keyword>
<keyword id="KW-1133">Transmembrane helix</keyword>
<protein>
    <recommendedName>
        <fullName evidence="1">Inner membrane-spanning protein YciB</fullName>
    </recommendedName>
</protein>
<accession>A6UE36</accession>
<evidence type="ECO:0000255" key="1">
    <source>
        <dbReference type="HAMAP-Rule" id="MF_00189"/>
    </source>
</evidence>
<comment type="function">
    <text evidence="1">Plays a role in cell envelope biogenesis, maintenance of cell envelope integrity and membrane homeostasis.</text>
</comment>
<comment type="subcellular location">
    <subcellularLocation>
        <location evidence="1">Cell inner membrane</location>
        <topology evidence="1">Multi-pass membrane protein</topology>
    </subcellularLocation>
</comment>
<comment type="similarity">
    <text evidence="1">Belongs to the YciB family.</text>
</comment>